<sequence>MTRVLLRTFPPGAKPPVRNSWVCMRKTESTTYSSKNQGAQVMVAVMKFSEDIPLTTLLETAPECEEILMKYGLQKIKEDGVYEIVVPRLTLRGFITLMNLKEKERDELVSKLEEIYNKKLSGG</sequence>
<keyword id="KW-1185">Reference proteome</keyword>
<accession>O67048</accession>
<reference key="1">
    <citation type="journal article" date="1998" name="Nature">
        <title>The complete genome of the hyperthermophilic bacterium Aquifex aeolicus.</title>
        <authorList>
            <person name="Deckert G."/>
            <person name="Warren P.V."/>
            <person name="Gaasterland T."/>
            <person name="Young W.G."/>
            <person name="Lenox A.L."/>
            <person name="Graham D.E."/>
            <person name="Overbeek R."/>
            <person name="Snead M.A."/>
            <person name="Keller M."/>
            <person name="Aujay M."/>
            <person name="Huber R."/>
            <person name="Feldman R.A."/>
            <person name="Short J.M."/>
            <person name="Olsen G.J."/>
            <person name="Swanson R.V."/>
        </authorList>
    </citation>
    <scope>NUCLEOTIDE SEQUENCE [LARGE SCALE GENOMIC DNA]</scope>
    <source>
        <strain>VF5</strain>
    </source>
</reference>
<protein>
    <recommendedName>
        <fullName>Uncharacterized protein aq_900</fullName>
    </recommendedName>
</protein>
<proteinExistence type="predicted"/>
<gene>
    <name type="ordered locus">aq_900</name>
</gene>
<name>Y900_AQUAE</name>
<dbReference type="EMBL" id="AE000657">
    <property type="protein sequence ID" value="AAC07018.1"/>
    <property type="molecule type" value="Genomic_DNA"/>
</dbReference>
<dbReference type="PIR" id="E70377">
    <property type="entry name" value="E70377"/>
</dbReference>
<dbReference type="SMR" id="O67048"/>
<dbReference type="STRING" id="224324.aq_900"/>
<dbReference type="EnsemblBacteria" id="AAC07018">
    <property type="protein sequence ID" value="AAC07018"/>
    <property type="gene ID" value="aq_900"/>
</dbReference>
<dbReference type="HOGENOM" id="CLU_2010519_0_0_0"/>
<dbReference type="InParanoid" id="O67048"/>
<dbReference type="Proteomes" id="UP000000798">
    <property type="component" value="Chromosome"/>
</dbReference>
<dbReference type="InterPro" id="IPR038062">
    <property type="entry name" value="ScdA-like_N_sf"/>
</dbReference>
<dbReference type="SUPFAM" id="SSF140683">
    <property type="entry name" value="SP0561-like"/>
    <property type="match status" value="1"/>
</dbReference>
<feature type="chain" id="PRO_0000186886" description="Uncharacterized protein aq_900">
    <location>
        <begin position="1"/>
        <end position="123"/>
    </location>
</feature>
<organism>
    <name type="scientific">Aquifex aeolicus (strain VF5)</name>
    <dbReference type="NCBI Taxonomy" id="224324"/>
    <lineage>
        <taxon>Bacteria</taxon>
        <taxon>Pseudomonadati</taxon>
        <taxon>Aquificota</taxon>
        <taxon>Aquificia</taxon>
        <taxon>Aquificales</taxon>
        <taxon>Aquificaceae</taxon>
        <taxon>Aquifex</taxon>
    </lineage>
</organism>